<reference key="1">
    <citation type="journal article" date="2005" name="Nucleic Acids Res.">
        <title>Genome dynamics and diversity of Shigella species, the etiologic agents of bacillary dysentery.</title>
        <authorList>
            <person name="Yang F."/>
            <person name="Yang J."/>
            <person name="Zhang X."/>
            <person name="Chen L."/>
            <person name="Jiang Y."/>
            <person name="Yan Y."/>
            <person name="Tang X."/>
            <person name="Wang J."/>
            <person name="Xiong Z."/>
            <person name="Dong J."/>
            <person name="Xue Y."/>
            <person name="Zhu Y."/>
            <person name="Xu X."/>
            <person name="Sun L."/>
            <person name="Chen S."/>
            <person name="Nie H."/>
            <person name="Peng J."/>
            <person name="Xu J."/>
            <person name="Wang Y."/>
            <person name="Yuan Z."/>
            <person name="Wen Y."/>
            <person name="Yao Z."/>
            <person name="Shen Y."/>
            <person name="Qiang B."/>
            <person name="Hou Y."/>
            <person name="Yu J."/>
            <person name="Jin Q."/>
        </authorList>
    </citation>
    <scope>NUCLEOTIDE SEQUENCE [LARGE SCALE GENOMIC DNA]</scope>
    <source>
        <strain>Sb227</strain>
    </source>
</reference>
<feature type="chain" id="PRO_0000258907" description="Anaerobic glycerol-3-phosphate dehydrogenase subunit B">
    <location>
        <begin position="1"/>
        <end position="419"/>
    </location>
</feature>
<accession>Q31Z75</accession>
<dbReference type="EC" id="1.1.5.3" evidence="1"/>
<dbReference type="EMBL" id="CP000036">
    <property type="protein sequence ID" value="ABB66633.1"/>
    <property type="molecule type" value="Genomic_DNA"/>
</dbReference>
<dbReference type="RefSeq" id="WP_001209900.1">
    <property type="nucleotide sequence ID" value="NC_007613.1"/>
</dbReference>
<dbReference type="KEGG" id="sbo:SBO_2052"/>
<dbReference type="HOGENOM" id="CLU_047793_0_0_6"/>
<dbReference type="UniPathway" id="UPA00618">
    <property type="reaction ID" value="UER00673"/>
</dbReference>
<dbReference type="Proteomes" id="UP000007067">
    <property type="component" value="Chromosome"/>
</dbReference>
<dbReference type="GO" id="GO:0009331">
    <property type="term" value="C:glycerol-3-phosphate dehydrogenase (FAD) complex"/>
    <property type="evidence" value="ECO:0007669"/>
    <property type="project" value="InterPro"/>
</dbReference>
<dbReference type="GO" id="GO:0004368">
    <property type="term" value="F:glycerol-3-phosphate dehydrogenase (quinone) activity"/>
    <property type="evidence" value="ECO:0007669"/>
    <property type="project" value="UniProtKB-UniRule"/>
</dbReference>
<dbReference type="GO" id="GO:0009061">
    <property type="term" value="P:anaerobic respiration"/>
    <property type="evidence" value="ECO:0007669"/>
    <property type="project" value="TreeGrafter"/>
</dbReference>
<dbReference type="GO" id="GO:0019563">
    <property type="term" value="P:glycerol catabolic process"/>
    <property type="evidence" value="ECO:0007669"/>
    <property type="project" value="UniProtKB-UniRule"/>
</dbReference>
<dbReference type="GO" id="GO:0046168">
    <property type="term" value="P:glycerol-3-phosphate catabolic process"/>
    <property type="evidence" value="ECO:0007669"/>
    <property type="project" value="TreeGrafter"/>
</dbReference>
<dbReference type="Gene3D" id="3.50.50.60">
    <property type="entry name" value="FAD/NAD(P)-binding domain"/>
    <property type="match status" value="1"/>
</dbReference>
<dbReference type="HAMAP" id="MF_00753">
    <property type="entry name" value="Glycerol3P_GlpB"/>
    <property type="match status" value="1"/>
</dbReference>
<dbReference type="InterPro" id="IPR003953">
    <property type="entry name" value="FAD-dep_OxRdtase_2_FAD-bd"/>
</dbReference>
<dbReference type="InterPro" id="IPR050315">
    <property type="entry name" value="FAD-oxidoreductase_2"/>
</dbReference>
<dbReference type="InterPro" id="IPR036188">
    <property type="entry name" value="FAD/NAD-bd_sf"/>
</dbReference>
<dbReference type="InterPro" id="IPR009158">
    <property type="entry name" value="G3P_DH_GlpB_su"/>
</dbReference>
<dbReference type="NCBIfam" id="TIGR03378">
    <property type="entry name" value="glycerol3P_GlpB"/>
    <property type="match status" value="1"/>
</dbReference>
<dbReference type="NCBIfam" id="NF003718">
    <property type="entry name" value="PRK05329.1-1"/>
    <property type="match status" value="1"/>
</dbReference>
<dbReference type="NCBIfam" id="NF003719">
    <property type="entry name" value="PRK05329.1-2"/>
    <property type="match status" value="1"/>
</dbReference>
<dbReference type="NCBIfam" id="NF003720">
    <property type="entry name" value="PRK05329.1-3"/>
    <property type="match status" value="1"/>
</dbReference>
<dbReference type="NCBIfam" id="NF003721">
    <property type="entry name" value="PRK05329.1-4"/>
    <property type="match status" value="1"/>
</dbReference>
<dbReference type="PANTHER" id="PTHR43400:SF11">
    <property type="entry name" value="ANAEROBIC GLYCEROL-3-PHOSPHATE DEHYDROGENASE SUBUNIT B"/>
    <property type="match status" value="1"/>
</dbReference>
<dbReference type="PANTHER" id="PTHR43400">
    <property type="entry name" value="FUMARATE REDUCTASE"/>
    <property type="match status" value="1"/>
</dbReference>
<dbReference type="Pfam" id="PF00890">
    <property type="entry name" value="FAD_binding_2"/>
    <property type="match status" value="1"/>
</dbReference>
<dbReference type="PIRSF" id="PIRSF000141">
    <property type="entry name" value="Anaerobic_G3P_dh"/>
    <property type="match status" value="1"/>
</dbReference>
<dbReference type="SUPFAM" id="SSF51905">
    <property type="entry name" value="FAD/NAD(P)-binding domain"/>
    <property type="match status" value="1"/>
</dbReference>
<protein>
    <recommendedName>
        <fullName evidence="1">Anaerobic glycerol-3-phosphate dehydrogenase subunit B</fullName>
        <shortName evidence="1">Anaerobic G-3-P dehydrogenase subunit B</shortName>
        <shortName evidence="1">Anaerobic G3Pdhase B</shortName>
        <ecNumber evidence="1">1.1.5.3</ecNumber>
    </recommendedName>
</protein>
<organism>
    <name type="scientific">Shigella boydii serotype 4 (strain Sb227)</name>
    <dbReference type="NCBI Taxonomy" id="300268"/>
    <lineage>
        <taxon>Bacteria</taxon>
        <taxon>Pseudomonadati</taxon>
        <taxon>Pseudomonadota</taxon>
        <taxon>Gammaproteobacteria</taxon>
        <taxon>Enterobacterales</taxon>
        <taxon>Enterobacteriaceae</taxon>
        <taxon>Shigella</taxon>
    </lineage>
</organism>
<proteinExistence type="inferred from homology"/>
<gene>
    <name evidence="1" type="primary">glpB</name>
    <name type="ordered locus">SBO_2052</name>
</gene>
<evidence type="ECO:0000255" key="1">
    <source>
        <dbReference type="HAMAP-Rule" id="MF_00753"/>
    </source>
</evidence>
<name>GLPB_SHIBS</name>
<sequence length="419" mass="45321">MRFDTVIMGGGLAGLLCGLQLQKHGLRCAIVTRGQSALHFSSGSLDLLSHLPDGQPVADIHSGLESLRQQAPAHPYSLLGPQRVLDLACQAQALIAESGAQLQGSVELAHQRITPLGTLRSTWLSSPEVPVWPLPAKKICVVGISGLMDFQAHLAAASLHELDLSVETAEIELPELDVLRNNATEFRAVNIARFLDNEENWPLLLDALIPVANTCEMILMPACFGLADDKLWRWLNEKLLCSLMLLPTLPPSVLGIRLQNQLQRQFVRQGGVWMPGDEVKKVTCKNGVVNEIWTRNHADIPLRPHFAVLASGSFFSGGLVAERNGIREPILGLDVLQTATRGEWYKGDFFAPQPWQQFGVTTDETLRPSQAGQTIENLFAIGSVLGGFDPIAQGCGGGVCAVSALHAAQQIAQRAGGQQ</sequence>
<comment type="function">
    <text evidence="1">Conversion of glycerol 3-phosphate to dihydroxyacetone. Uses fumarate or nitrate as electron acceptor.</text>
</comment>
<comment type="catalytic activity">
    <reaction evidence="1">
        <text>a quinone + sn-glycerol 3-phosphate = dihydroxyacetone phosphate + a quinol</text>
        <dbReference type="Rhea" id="RHEA:18977"/>
        <dbReference type="ChEBI" id="CHEBI:24646"/>
        <dbReference type="ChEBI" id="CHEBI:57597"/>
        <dbReference type="ChEBI" id="CHEBI:57642"/>
        <dbReference type="ChEBI" id="CHEBI:132124"/>
        <dbReference type="EC" id="1.1.5.3"/>
    </reaction>
</comment>
<comment type="cofactor">
    <cofactor evidence="1">
        <name>FMN</name>
        <dbReference type="ChEBI" id="CHEBI:58210"/>
    </cofactor>
</comment>
<comment type="pathway">
    <text evidence="1">Polyol metabolism; glycerol degradation via glycerol kinase pathway; glycerone phosphate from sn-glycerol 3-phosphate (anaerobic route): step 1/1.</text>
</comment>
<comment type="subunit">
    <text evidence="1">Composed of a catalytic GlpA/B dimer and of membrane bound GlpC.</text>
</comment>
<comment type="similarity">
    <text evidence="1">Belongs to the anaerobic G-3-P dehydrogenase subunit B family.</text>
</comment>
<keyword id="KW-0285">Flavoprotein</keyword>
<keyword id="KW-0288">FMN</keyword>
<keyword id="KW-0560">Oxidoreductase</keyword>